<keyword id="KW-0472">Membrane</keyword>
<keyword id="KW-0793">Thylakoid</keyword>
<keyword id="KW-0812">Transmembrane</keyword>
<keyword id="KW-1133">Transmembrane helix</keyword>
<reference key="1">
    <citation type="journal article" date="2014" name="Stand. Genomic Sci.">
        <title>Complete genome sequence of Anabaena variabilis ATCC 29413.</title>
        <authorList>
            <person name="Thiel T."/>
            <person name="Pratte B.S."/>
            <person name="Zhong J."/>
            <person name="Goodwin L."/>
            <person name="Copeland A."/>
            <person name="Lucas S."/>
            <person name="Han C."/>
            <person name="Pitluck S."/>
            <person name="Land M.L."/>
            <person name="Kyrpides N.C."/>
            <person name="Woyke T."/>
        </authorList>
    </citation>
    <scope>NUCLEOTIDE SEQUENCE [LARGE SCALE GENOMIC DNA]</scope>
    <source>
        <strain>ATCC 29413 / PCC 7937</strain>
    </source>
</reference>
<sequence length="43" mass="4549">MEPAIVLIISVGAALVAVTGYGIYTAFGPPSRELSDPFEDHED</sequence>
<proteinExistence type="inferred from homology"/>
<protein>
    <recommendedName>
        <fullName evidence="1">Protein PsbN</fullName>
    </recommendedName>
</protein>
<evidence type="ECO:0000255" key="1">
    <source>
        <dbReference type="HAMAP-Rule" id="MF_00293"/>
    </source>
</evidence>
<dbReference type="EMBL" id="CP000117">
    <property type="protein sequence ID" value="ABA24049.1"/>
    <property type="molecule type" value="Genomic_DNA"/>
</dbReference>
<dbReference type="RefSeq" id="WP_010995021.1">
    <property type="nucleotide sequence ID" value="NC_007413.1"/>
</dbReference>
<dbReference type="SMR" id="Q3M4N7"/>
<dbReference type="STRING" id="240292.Ava_4451"/>
<dbReference type="GeneID" id="58722020"/>
<dbReference type="KEGG" id="ava:Ava_4451"/>
<dbReference type="eggNOG" id="ENOG50339MH">
    <property type="taxonomic scope" value="Bacteria"/>
</dbReference>
<dbReference type="HOGENOM" id="CLU_205504_0_0_3"/>
<dbReference type="Proteomes" id="UP000002533">
    <property type="component" value="Chromosome"/>
</dbReference>
<dbReference type="GO" id="GO:0031676">
    <property type="term" value="C:plasma membrane-derived thylakoid membrane"/>
    <property type="evidence" value="ECO:0007669"/>
    <property type="project" value="UniProtKB-SubCell"/>
</dbReference>
<dbReference type="GO" id="GO:0015979">
    <property type="term" value="P:photosynthesis"/>
    <property type="evidence" value="ECO:0007669"/>
    <property type="project" value="InterPro"/>
</dbReference>
<dbReference type="HAMAP" id="MF_00293">
    <property type="entry name" value="PSII_PsbN"/>
    <property type="match status" value="1"/>
</dbReference>
<dbReference type="InterPro" id="IPR003398">
    <property type="entry name" value="PSII_PsbN"/>
</dbReference>
<dbReference type="NCBIfam" id="NF009650">
    <property type="entry name" value="PRK13183.1"/>
    <property type="match status" value="1"/>
</dbReference>
<dbReference type="PANTHER" id="PTHR35326">
    <property type="entry name" value="PROTEIN PSBN"/>
    <property type="match status" value="1"/>
</dbReference>
<dbReference type="PANTHER" id="PTHR35326:SF3">
    <property type="entry name" value="PROTEIN PSBN"/>
    <property type="match status" value="1"/>
</dbReference>
<dbReference type="Pfam" id="PF02468">
    <property type="entry name" value="PsbN"/>
    <property type="match status" value="1"/>
</dbReference>
<organism>
    <name type="scientific">Trichormus variabilis (strain ATCC 29413 / PCC 7937)</name>
    <name type="common">Anabaena variabilis</name>
    <dbReference type="NCBI Taxonomy" id="240292"/>
    <lineage>
        <taxon>Bacteria</taxon>
        <taxon>Bacillati</taxon>
        <taxon>Cyanobacteriota</taxon>
        <taxon>Cyanophyceae</taxon>
        <taxon>Nostocales</taxon>
        <taxon>Nostocaceae</taxon>
        <taxon>Trichormus</taxon>
    </lineage>
</organism>
<feature type="chain" id="PRO_0000232782" description="Protein PsbN">
    <location>
        <begin position="1"/>
        <end position="43"/>
    </location>
</feature>
<feature type="transmembrane region" description="Helical" evidence="1">
    <location>
        <begin position="4"/>
        <end position="24"/>
    </location>
</feature>
<name>PSBN_TRIV2</name>
<gene>
    <name evidence="1" type="primary">psbN</name>
    <name type="ordered locus">Ava_4451</name>
</gene>
<comment type="function">
    <text evidence="1">May play a role in photosystem I and II biogenesis.</text>
</comment>
<comment type="subcellular location">
    <subcellularLocation>
        <location evidence="1">Cellular thylakoid membrane</location>
        <topology evidence="1">Single-pass membrane protein</topology>
    </subcellularLocation>
</comment>
<comment type="similarity">
    <text evidence="1">Belongs to the PsbN family.</text>
</comment>
<comment type="caution">
    <text evidence="1">Originally thought to be a component of PSII; based on experiments in Synechocystis, N.tabacum and barley, and its absence from PSII in T.elongatus and T.vulcanus, this is probably not true.</text>
</comment>
<accession>Q3M4N7</accession>